<sequence>MINKTAKNTKRLRRAERVRYKLRQTSERPRLVFNKTNRYLTAQIIDDAKGVTLVYATTLEKDFPKHENSKKSKSAATELGKVVADKAKKAGVSQVVLDRSGMVYHGRIAAFADSAREGGLEF</sequence>
<protein>
    <recommendedName>
        <fullName evidence="1">Large ribosomal subunit protein uL18</fullName>
    </recommendedName>
    <alternativeName>
        <fullName evidence="2">50S ribosomal protein L18</fullName>
    </alternativeName>
</protein>
<reference key="1">
    <citation type="journal article" date="2008" name="PLoS ONE">
        <title>Genome sequence of the saprophyte Leptospira biflexa provides insights into the evolution of Leptospira and the pathogenesis of leptospirosis.</title>
        <authorList>
            <person name="Picardeau M."/>
            <person name="Bulach D.M."/>
            <person name="Bouchier C."/>
            <person name="Zuerner R.L."/>
            <person name="Zidane N."/>
            <person name="Wilson P.J."/>
            <person name="Creno S."/>
            <person name="Kuczek E.S."/>
            <person name="Bommezzadri S."/>
            <person name="Davis J.C."/>
            <person name="McGrath A."/>
            <person name="Johnson M.J."/>
            <person name="Boursaux-Eude C."/>
            <person name="Seemann T."/>
            <person name="Rouy Z."/>
            <person name="Coppel R.L."/>
            <person name="Rood J.I."/>
            <person name="Lajus A."/>
            <person name="Davies J.K."/>
            <person name="Medigue C."/>
            <person name="Adler B."/>
        </authorList>
    </citation>
    <scope>NUCLEOTIDE SEQUENCE [LARGE SCALE GENOMIC DNA]</scope>
    <source>
        <strain>Patoc 1 / ATCC 23582 / Paris</strain>
    </source>
</reference>
<proteinExistence type="inferred from homology"/>
<accession>B0SSG2</accession>
<keyword id="KW-1185">Reference proteome</keyword>
<keyword id="KW-0687">Ribonucleoprotein</keyword>
<keyword id="KW-0689">Ribosomal protein</keyword>
<keyword id="KW-0694">RNA-binding</keyword>
<keyword id="KW-0699">rRNA-binding</keyword>
<gene>
    <name evidence="1" type="primary">rplR</name>
    <name type="ordered locus">LEPBI_I1949</name>
</gene>
<feature type="chain" id="PRO_1000142683" description="Large ribosomal subunit protein uL18">
    <location>
        <begin position="1"/>
        <end position="122"/>
    </location>
</feature>
<evidence type="ECO:0000255" key="1">
    <source>
        <dbReference type="HAMAP-Rule" id="MF_01337"/>
    </source>
</evidence>
<evidence type="ECO:0000305" key="2"/>
<name>RL18_LEPBP</name>
<comment type="function">
    <text evidence="1">This is one of the proteins that bind and probably mediate the attachment of the 5S RNA into the large ribosomal subunit, where it forms part of the central protuberance.</text>
</comment>
<comment type="subunit">
    <text evidence="1">Part of the 50S ribosomal subunit; part of the 5S rRNA/L5/L18/L25 subcomplex. Contacts the 5S and 23S rRNAs.</text>
</comment>
<comment type="similarity">
    <text evidence="1">Belongs to the universal ribosomal protein uL18 family.</text>
</comment>
<dbReference type="EMBL" id="CP000786">
    <property type="protein sequence ID" value="ABZ98052.1"/>
    <property type="molecule type" value="Genomic_DNA"/>
</dbReference>
<dbReference type="RefSeq" id="WP_012388928.1">
    <property type="nucleotide sequence ID" value="NC_010602.1"/>
</dbReference>
<dbReference type="SMR" id="B0SSG2"/>
<dbReference type="STRING" id="456481.LEPBI_I1949"/>
<dbReference type="KEGG" id="lbi:LEPBI_I1949"/>
<dbReference type="HOGENOM" id="CLU_098841_0_1_12"/>
<dbReference type="OrthoDB" id="9810939at2"/>
<dbReference type="BioCyc" id="LBIF456481:LEPBI_RS09630-MONOMER"/>
<dbReference type="Proteomes" id="UP000001847">
    <property type="component" value="Chromosome I"/>
</dbReference>
<dbReference type="GO" id="GO:0022625">
    <property type="term" value="C:cytosolic large ribosomal subunit"/>
    <property type="evidence" value="ECO:0007669"/>
    <property type="project" value="TreeGrafter"/>
</dbReference>
<dbReference type="GO" id="GO:0008097">
    <property type="term" value="F:5S rRNA binding"/>
    <property type="evidence" value="ECO:0007669"/>
    <property type="project" value="TreeGrafter"/>
</dbReference>
<dbReference type="GO" id="GO:0003735">
    <property type="term" value="F:structural constituent of ribosome"/>
    <property type="evidence" value="ECO:0007669"/>
    <property type="project" value="InterPro"/>
</dbReference>
<dbReference type="GO" id="GO:0006412">
    <property type="term" value="P:translation"/>
    <property type="evidence" value="ECO:0007669"/>
    <property type="project" value="UniProtKB-UniRule"/>
</dbReference>
<dbReference type="CDD" id="cd00432">
    <property type="entry name" value="Ribosomal_L18_L5e"/>
    <property type="match status" value="1"/>
</dbReference>
<dbReference type="FunFam" id="3.30.420.100:FF:000001">
    <property type="entry name" value="50S ribosomal protein L18"/>
    <property type="match status" value="1"/>
</dbReference>
<dbReference type="Gene3D" id="3.30.420.100">
    <property type="match status" value="1"/>
</dbReference>
<dbReference type="HAMAP" id="MF_01337_B">
    <property type="entry name" value="Ribosomal_uL18_B"/>
    <property type="match status" value="1"/>
</dbReference>
<dbReference type="InterPro" id="IPR004389">
    <property type="entry name" value="Ribosomal_uL18_bac-type"/>
</dbReference>
<dbReference type="InterPro" id="IPR005484">
    <property type="entry name" value="Ribosomal_uL18_bac/euk"/>
</dbReference>
<dbReference type="NCBIfam" id="TIGR00060">
    <property type="entry name" value="L18_bact"/>
    <property type="match status" value="1"/>
</dbReference>
<dbReference type="PANTHER" id="PTHR12899">
    <property type="entry name" value="39S RIBOSOMAL PROTEIN L18, MITOCHONDRIAL"/>
    <property type="match status" value="1"/>
</dbReference>
<dbReference type="PANTHER" id="PTHR12899:SF3">
    <property type="entry name" value="LARGE RIBOSOMAL SUBUNIT PROTEIN UL18M"/>
    <property type="match status" value="1"/>
</dbReference>
<dbReference type="Pfam" id="PF00861">
    <property type="entry name" value="Ribosomal_L18p"/>
    <property type="match status" value="1"/>
</dbReference>
<dbReference type="SUPFAM" id="SSF53137">
    <property type="entry name" value="Translational machinery components"/>
    <property type="match status" value="1"/>
</dbReference>
<organism>
    <name type="scientific">Leptospira biflexa serovar Patoc (strain Patoc 1 / ATCC 23582 / Paris)</name>
    <dbReference type="NCBI Taxonomy" id="456481"/>
    <lineage>
        <taxon>Bacteria</taxon>
        <taxon>Pseudomonadati</taxon>
        <taxon>Spirochaetota</taxon>
        <taxon>Spirochaetia</taxon>
        <taxon>Leptospirales</taxon>
        <taxon>Leptospiraceae</taxon>
        <taxon>Leptospira</taxon>
    </lineage>
</organism>